<gene>
    <name evidence="1" type="primary">mnmG</name>
    <name evidence="1" type="synonym">gidA</name>
    <name type="ordered locus">CV_0661</name>
</gene>
<evidence type="ECO:0000255" key="1">
    <source>
        <dbReference type="HAMAP-Rule" id="MF_00129"/>
    </source>
</evidence>
<evidence type="ECO:0000305" key="2"/>
<comment type="function">
    <text evidence="1">NAD-binding protein involved in the addition of a carboxymethylaminomethyl (cmnm) group at the wobble position (U34) of certain tRNAs, forming tRNA-cmnm(5)s(2)U34.</text>
</comment>
<comment type="cofactor">
    <cofactor evidence="1">
        <name>FAD</name>
        <dbReference type="ChEBI" id="CHEBI:57692"/>
    </cofactor>
</comment>
<comment type="subunit">
    <text evidence="1">Homodimer. Heterotetramer of two MnmE and two MnmG subunits.</text>
</comment>
<comment type="subcellular location">
    <subcellularLocation>
        <location evidence="1">Cytoplasm</location>
    </subcellularLocation>
</comment>
<comment type="similarity">
    <text evidence="1">Belongs to the MnmG family.</text>
</comment>
<comment type="sequence caution" evidence="2">
    <conflict type="erroneous initiation">
        <sequence resource="EMBL-CDS" id="AAQ58337"/>
    </conflict>
</comment>
<organism>
    <name type="scientific">Chromobacterium violaceum (strain ATCC 12472 / DSM 30191 / JCM 1249 / CCUG 213 / NBRC 12614 / NCIMB 9131 / NCTC 9757 / MK)</name>
    <dbReference type="NCBI Taxonomy" id="243365"/>
    <lineage>
        <taxon>Bacteria</taxon>
        <taxon>Pseudomonadati</taxon>
        <taxon>Pseudomonadota</taxon>
        <taxon>Betaproteobacteria</taxon>
        <taxon>Neisseriales</taxon>
        <taxon>Chromobacteriaceae</taxon>
        <taxon>Chromobacterium</taxon>
    </lineage>
</organism>
<reference key="1">
    <citation type="journal article" date="2003" name="Proc. Natl. Acad. Sci. U.S.A.">
        <title>The complete genome sequence of Chromobacterium violaceum reveals remarkable and exploitable bacterial adaptability.</title>
        <authorList>
            <person name="Vasconcelos A.T.R."/>
            <person name="de Almeida D.F."/>
            <person name="Hungria M."/>
            <person name="Guimaraes C.T."/>
            <person name="Antonio R.V."/>
            <person name="Almeida F.C."/>
            <person name="de Almeida L.G.P."/>
            <person name="de Almeida R."/>
            <person name="Alves-Gomes J.A."/>
            <person name="Andrade E.M."/>
            <person name="Araripe J."/>
            <person name="de Araujo M.F.F."/>
            <person name="Astolfi-Filho S."/>
            <person name="Azevedo V."/>
            <person name="Baptista A.J."/>
            <person name="Bataus L.A.M."/>
            <person name="Batista J.S."/>
            <person name="Belo A."/>
            <person name="van den Berg C."/>
            <person name="Bogo M."/>
            <person name="Bonatto S."/>
            <person name="Bordignon J."/>
            <person name="Brigido M.M."/>
            <person name="Brito C.A."/>
            <person name="Brocchi M."/>
            <person name="Burity H.A."/>
            <person name="Camargo A.A."/>
            <person name="Cardoso D.D.P."/>
            <person name="Carneiro N.P."/>
            <person name="Carraro D.M."/>
            <person name="Carvalho C.M.B."/>
            <person name="Cascardo J.C.M."/>
            <person name="Cavada B.S."/>
            <person name="Chueire L.M.O."/>
            <person name="Creczynski-Pasa T.B."/>
            <person name="Cunha-Junior N.C."/>
            <person name="Fagundes N."/>
            <person name="Falcao C.L."/>
            <person name="Fantinatti F."/>
            <person name="Farias I.P."/>
            <person name="Felipe M.S.S."/>
            <person name="Ferrari L.P."/>
            <person name="Ferro J.A."/>
            <person name="Ferro M.I.T."/>
            <person name="Franco G.R."/>
            <person name="Freitas N.S.A."/>
            <person name="Furlan L.R."/>
            <person name="Gazzinelli R.T."/>
            <person name="Gomes E.A."/>
            <person name="Goncalves P.R."/>
            <person name="Grangeiro T.B."/>
            <person name="Grattapaglia D."/>
            <person name="Grisard E.C."/>
            <person name="Hanna E.S."/>
            <person name="Jardim S.N."/>
            <person name="Laurino J."/>
            <person name="Leoi L.C.T."/>
            <person name="Lima L.F.A."/>
            <person name="Loureiro M.F."/>
            <person name="Lyra M.C.C.P."/>
            <person name="Madeira H.M.F."/>
            <person name="Manfio G.P."/>
            <person name="Maranhao A.Q."/>
            <person name="Martins W.S."/>
            <person name="di Mauro S.M.Z."/>
            <person name="de Medeiros S.R.B."/>
            <person name="Meissner R.V."/>
            <person name="Moreira M.A.M."/>
            <person name="Nascimento F.F."/>
            <person name="Nicolas M.F."/>
            <person name="Oliveira J.G."/>
            <person name="Oliveira S.C."/>
            <person name="Paixao R.F.C."/>
            <person name="Parente J.A."/>
            <person name="Pedrosa F.O."/>
            <person name="Pena S.D.J."/>
            <person name="Pereira J.O."/>
            <person name="Pereira M."/>
            <person name="Pinto L.S.R.C."/>
            <person name="Pinto L.S."/>
            <person name="Porto J.I.R."/>
            <person name="Potrich D.P."/>
            <person name="Ramalho-Neto C.E."/>
            <person name="Reis A.M.M."/>
            <person name="Rigo L.U."/>
            <person name="Rondinelli E."/>
            <person name="Santos E.B.P."/>
            <person name="Santos F.R."/>
            <person name="Schneider M.P.C."/>
            <person name="Seuanez H.N."/>
            <person name="Silva A.M.R."/>
            <person name="da Silva A.L.C."/>
            <person name="Silva D.W."/>
            <person name="Silva R."/>
            <person name="Simoes I.C."/>
            <person name="Simon D."/>
            <person name="Soares C.M.A."/>
            <person name="Soares R.B.A."/>
            <person name="Souza E.M."/>
            <person name="Souza K.R.L."/>
            <person name="Souza R.C."/>
            <person name="Steffens M.B.R."/>
            <person name="Steindel M."/>
            <person name="Teixeira S.R."/>
            <person name="Urmenyi T."/>
            <person name="Vettore A."/>
            <person name="Wassem R."/>
            <person name="Zaha A."/>
            <person name="Simpson A.J.G."/>
        </authorList>
    </citation>
    <scope>NUCLEOTIDE SEQUENCE [LARGE SCALE GENOMIC DNA]</scope>
    <source>
        <strain>ATCC 12472 / DSM 30191 / JCM 1249 / CCUG 213 / NBRC 12614 / NCIMB 9131 / NCTC 9757 / MK</strain>
    </source>
</reference>
<proteinExistence type="inferred from homology"/>
<feature type="chain" id="PRO_0000345255" description="tRNA uridine 5-carboxymethylaminomethyl modification enzyme MnmG">
    <location>
        <begin position="1"/>
        <end position="632"/>
    </location>
</feature>
<feature type="binding site" evidence="1">
    <location>
        <begin position="13"/>
        <end position="18"/>
    </location>
    <ligand>
        <name>FAD</name>
        <dbReference type="ChEBI" id="CHEBI:57692"/>
    </ligand>
</feature>
<feature type="binding site" evidence="1">
    <location>
        <begin position="273"/>
        <end position="287"/>
    </location>
    <ligand>
        <name>NAD(+)</name>
        <dbReference type="ChEBI" id="CHEBI:57540"/>
    </ligand>
</feature>
<keyword id="KW-0963">Cytoplasm</keyword>
<keyword id="KW-0274">FAD</keyword>
<keyword id="KW-0285">Flavoprotein</keyword>
<keyword id="KW-0520">NAD</keyword>
<keyword id="KW-1185">Reference proteome</keyword>
<keyword id="KW-0819">tRNA processing</keyword>
<dbReference type="EMBL" id="AE016825">
    <property type="protein sequence ID" value="AAQ58337.1"/>
    <property type="status" value="ALT_INIT"/>
    <property type="molecule type" value="Genomic_DNA"/>
</dbReference>
<dbReference type="RefSeq" id="WP_011134216.1">
    <property type="nucleotide sequence ID" value="NC_005085.1"/>
</dbReference>
<dbReference type="SMR" id="Q7P0A6"/>
<dbReference type="STRING" id="243365.CV_0661"/>
<dbReference type="KEGG" id="cvi:CV_0661"/>
<dbReference type="eggNOG" id="COG0445">
    <property type="taxonomic scope" value="Bacteria"/>
</dbReference>
<dbReference type="HOGENOM" id="CLU_007831_2_2_4"/>
<dbReference type="OrthoDB" id="9815560at2"/>
<dbReference type="Proteomes" id="UP000001424">
    <property type="component" value="Chromosome"/>
</dbReference>
<dbReference type="GO" id="GO:0005829">
    <property type="term" value="C:cytosol"/>
    <property type="evidence" value="ECO:0007669"/>
    <property type="project" value="TreeGrafter"/>
</dbReference>
<dbReference type="GO" id="GO:0050660">
    <property type="term" value="F:flavin adenine dinucleotide binding"/>
    <property type="evidence" value="ECO:0007669"/>
    <property type="project" value="UniProtKB-UniRule"/>
</dbReference>
<dbReference type="GO" id="GO:0030488">
    <property type="term" value="P:tRNA methylation"/>
    <property type="evidence" value="ECO:0007669"/>
    <property type="project" value="TreeGrafter"/>
</dbReference>
<dbReference type="GO" id="GO:0002098">
    <property type="term" value="P:tRNA wobble uridine modification"/>
    <property type="evidence" value="ECO:0007669"/>
    <property type="project" value="InterPro"/>
</dbReference>
<dbReference type="FunFam" id="1.10.10.1800:FF:000001">
    <property type="entry name" value="tRNA uridine 5-carboxymethylaminomethyl modification enzyme MnmG"/>
    <property type="match status" value="1"/>
</dbReference>
<dbReference type="FunFam" id="1.10.150.570:FF:000001">
    <property type="entry name" value="tRNA uridine 5-carboxymethylaminomethyl modification enzyme MnmG"/>
    <property type="match status" value="1"/>
</dbReference>
<dbReference type="FunFam" id="3.50.50.60:FF:000002">
    <property type="entry name" value="tRNA uridine 5-carboxymethylaminomethyl modification enzyme MnmG"/>
    <property type="match status" value="1"/>
</dbReference>
<dbReference type="FunFam" id="3.50.50.60:FF:000010">
    <property type="entry name" value="tRNA uridine 5-carboxymethylaminomethyl modification enzyme MnmG"/>
    <property type="match status" value="1"/>
</dbReference>
<dbReference type="Gene3D" id="3.50.50.60">
    <property type="entry name" value="FAD/NAD(P)-binding domain"/>
    <property type="match status" value="2"/>
</dbReference>
<dbReference type="Gene3D" id="1.10.150.570">
    <property type="entry name" value="GidA associated domain, C-terminal subdomain"/>
    <property type="match status" value="1"/>
</dbReference>
<dbReference type="Gene3D" id="1.10.10.1800">
    <property type="entry name" value="tRNA uridine 5-carboxymethylaminomethyl modification enzyme MnmG/GidA"/>
    <property type="match status" value="1"/>
</dbReference>
<dbReference type="HAMAP" id="MF_00129">
    <property type="entry name" value="MnmG_GidA"/>
    <property type="match status" value="1"/>
</dbReference>
<dbReference type="InterPro" id="IPR036188">
    <property type="entry name" value="FAD/NAD-bd_sf"/>
</dbReference>
<dbReference type="InterPro" id="IPR049312">
    <property type="entry name" value="GIDA_C_N"/>
</dbReference>
<dbReference type="InterPro" id="IPR004416">
    <property type="entry name" value="MnmG"/>
</dbReference>
<dbReference type="InterPro" id="IPR002218">
    <property type="entry name" value="MnmG-rel"/>
</dbReference>
<dbReference type="InterPro" id="IPR020595">
    <property type="entry name" value="MnmG-rel_CS"/>
</dbReference>
<dbReference type="InterPro" id="IPR026904">
    <property type="entry name" value="MnmG_C"/>
</dbReference>
<dbReference type="InterPro" id="IPR047001">
    <property type="entry name" value="MnmG_C_subdom"/>
</dbReference>
<dbReference type="InterPro" id="IPR044920">
    <property type="entry name" value="MnmG_C_subdom_sf"/>
</dbReference>
<dbReference type="InterPro" id="IPR040131">
    <property type="entry name" value="MnmG_N"/>
</dbReference>
<dbReference type="NCBIfam" id="TIGR00136">
    <property type="entry name" value="mnmG_gidA"/>
    <property type="match status" value="1"/>
</dbReference>
<dbReference type="PANTHER" id="PTHR11806">
    <property type="entry name" value="GLUCOSE INHIBITED DIVISION PROTEIN A"/>
    <property type="match status" value="1"/>
</dbReference>
<dbReference type="PANTHER" id="PTHR11806:SF0">
    <property type="entry name" value="PROTEIN MTO1 HOMOLOG, MITOCHONDRIAL"/>
    <property type="match status" value="1"/>
</dbReference>
<dbReference type="Pfam" id="PF01134">
    <property type="entry name" value="GIDA"/>
    <property type="match status" value="1"/>
</dbReference>
<dbReference type="Pfam" id="PF21680">
    <property type="entry name" value="GIDA_C_1st"/>
    <property type="match status" value="1"/>
</dbReference>
<dbReference type="Pfam" id="PF13932">
    <property type="entry name" value="SAM_GIDA_C"/>
    <property type="match status" value="1"/>
</dbReference>
<dbReference type="SMART" id="SM01228">
    <property type="entry name" value="GIDA_assoc_3"/>
    <property type="match status" value="1"/>
</dbReference>
<dbReference type="SUPFAM" id="SSF51905">
    <property type="entry name" value="FAD/NAD(P)-binding domain"/>
    <property type="match status" value="1"/>
</dbReference>
<dbReference type="PROSITE" id="PS01280">
    <property type="entry name" value="GIDA_1"/>
    <property type="match status" value="1"/>
</dbReference>
<dbReference type="PROSITE" id="PS01281">
    <property type="entry name" value="GIDA_2"/>
    <property type="match status" value="1"/>
</dbReference>
<name>MNMG_CHRVO</name>
<protein>
    <recommendedName>
        <fullName evidence="1">tRNA uridine 5-carboxymethylaminomethyl modification enzyme MnmG</fullName>
    </recommendedName>
    <alternativeName>
        <fullName evidence="1">Glucose-inhibited division protein A</fullName>
    </alternativeName>
</protein>
<accession>Q7P0A6</accession>
<sequence>MIYPTSFDVIVVGGGHAGTEAALAAARMGCATLLLTHNIETLGQMSCNPSIGGIGKGHLVKEVDALGGAMALATDIGGIQFRTLNASKGPAVRATRAQADRILYKAAIREMLENQPNLTLFQQPVDDLLIEGDRVVGAITAIGITFRAKTVVLTAGTFLSGKIHVGLENYTGGRAGDQAASTLGERLRELNLPVGRLKTGTPPRIDGRSVDFSVMEEQPGDTPEPVFSYRGKRAMHPKQLPCWITHTNERTHDIIRSGFDRSPMFTGVIEGVGPRYCPSIEDKINRFADKDSHQVFLEPEGLTTHEFYPNGISTSLPFDIQLAAVRSIRGMENAHILRPGYAIEYDYFDPRGLKASLETKAIQGLFFAGQINGTTGYEEAAAQGLLAGLNAGLFAREQEAWCPRRDEAYLGVLVDDLITKGVSEPYRMFTSRAEFRLQLREDNADLRLTEMGRKLGVVGDEQWDAFCRKRDAVEAEKARLQATWLHPSKLADPAALARVLGKPIEREYTLQDLLKRPNVPYRELMTVPEAADGAPELADEVAEQVEIQVKYQGYINRQNEELARRDNLEDIRLPGDIDYGLVKGLSKEVQQKLNQQRPETLGQASRIQGITPAAVALLMVHLRRGFTDAKTA</sequence>